<feature type="chain" id="PRO_1000117969" description="Sulfate adenylyltransferase">
    <location>
        <begin position="1"/>
        <end position="399"/>
    </location>
</feature>
<gene>
    <name evidence="1" type="primary">sat</name>
    <name type="ordered locus">Sca_0063</name>
</gene>
<accession>B9DLL5</accession>
<reference key="1">
    <citation type="journal article" date="2009" name="Appl. Environ. Microbiol.">
        <title>Genome analysis of the meat starter culture bacterium Staphylococcus carnosus TM300.</title>
        <authorList>
            <person name="Rosenstein R."/>
            <person name="Nerz C."/>
            <person name="Biswas L."/>
            <person name="Resch A."/>
            <person name="Raddatz G."/>
            <person name="Schuster S.C."/>
            <person name="Goetz F."/>
        </authorList>
    </citation>
    <scope>NUCLEOTIDE SEQUENCE [LARGE SCALE GENOMIC DNA]</scope>
    <source>
        <strain>TM300</strain>
    </source>
</reference>
<evidence type="ECO:0000255" key="1">
    <source>
        <dbReference type="HAMAP-Rule" id="MF_00066"/>
    </source>
</evidence>
<dbReference type="EC" id="2.7.7.4" evidence="1"/>
<dbReference type="EMBL" id="AM295250">
    <property type="protein sequence ID" value="CAL26977.1"/>
    <property type="molecule type" value="Genomic_DNA"/>
</dbReference>
<dbReference type="RefSeq" id="WP_012664092.1">
    <property type="nucleotide sequence ID" value="NC_012121.1"/>
</dbReference>
<dbReference type="SMR" id="B9DLL5"/>
<dbReference type="GeneID" id="93794975"/>
<dbReference type="KEGG" id="sca:SCA_0063"/>
<dbReference type="eggNOG" id="COG2046">
    <property type="taxonomic scope" value="Bacteria"/>
</dbReference>
<dbReference type="HOGENOM" id="CLU_022950_1_1_9"/>
<dbReference type="OrthoDB" id="9804504at2"/>
<dbReference type="BioCyc" id="SCAR396513:SCA_RS00300-MONOMER"/>
<dbReference type="UniPathway" id="UPA00140">
    <property type="reaction ID" value="UER00204"/>
</dbReference>
<dbReference type="Proteomes" id="UP000000444">
    <property type="component" value="Chromosome"/>
</dbReference>
<dbReference type="GO" id="GO:0005524">
    <property type="term" value="F:ATP binding"/>
    <property type="evidence" value="ECO:0007669"/>
    <property type="project" value="UniProtKB-KW"/>
</dbReference>
<dbReference type="GO" id="GO:0004781">
    <property type="term" value="F:sulfate adenylyltransferase (ATP) activity"/>
    <property type="evidence" value="ECO:0007669"/>
    <property type="project" value="UniProtKB-UniRule"/>
</dbReference>
<dbReference type="GO" id="GO:0070814">
    <property type="term" value="P:hydrogen sulfide biosynthetic process"/>
    <property type="evidence" value="ECO:0007669"/>
    <property type="project" value="UniProtKB-UniRule"/>
</dbReference>
<dbReference type="GO" id="GO:0000103">
    <property type="term" value="P:sulfate assimilation"/>
    <property type="evidence" value="ECO:0007669"/>
    <property type="project" value="UniProtKB-UniRule"/>
</dbReference>
<dbReference type="CDD" id="cd00517">
    <property type="entry name" value="ATPS"/>
    <property type="match status" value="1"/>
</dbReference>
<dbReference type="Gene3D" id="3.40.50.620">
    <property type="entry name" value="HUPs"/>
    <property type="match status" value="1"/>
</dbReference>
<dbReference type="Gene3D" id="3.10.400.10">
    <property type="entry name" value="Sulfate adenylyltransferase"/>
    <property type="match status" value="1"/>
</dbReference>
<dbReference type="HAMAP" id="MF_00066">
    <property type="entry name" value="Sulf_adenylyltr"/>
    <property type="match status" value="1"/>
</dbReference>
<dbReference type="InterPro" id="IPR025980">
    <property type="entry name" value="ATP-Sase_PUA-like_dom"/>
</dbReference>
<dbReference type="InterPro" id="IPR015947">
    <property type="entry name" value="PUA-like_sf"/>
</dbReference>
<dbReference type="InterPro" id="IPR014729">
    <property type="entry name" value="Rossmann-like_a/b/a_fold"/>
</dbReference>
<dbReference type="InterPro" id="IPR020792">
    <property type="entry name" value="SO4_adenylyltransferase_pro"/>
</dbReference>
<dbReference type="InterPro" id="IPR024951">
    <property type="entry name" value="Sulfurylase_cat_dom"/>
</dbReference>
<dbReference type="InterPro" id="IPR002650">
    <property type="entry name" value="Sulphate_adenylyltransferase"/>
</dbReference>
<dbReference type="NCBIfam" id="NF003166">
    <property type="entry name" value="PRK04149.1"/>
    <property type="match status" value="1"/>
</dbReference>
<dbReference type="NCBIfam" id="TIGR00339">
    <property type="entry name" value="sopT"/>
    <property type="match status" value="1"/>
</dbReference>
<dbReference type="PANTHER" id="PTHR43509">
    <property type="match status" value="1"/>
</dbReference>
<dbReference type="PANTHER" id="PTHR43509:SF1">
    <property type="entry name" value="SULFATE ADENYLYLTRANSFERASE"/>
    <property type="match status" value="1"/>
</dbReference>
<dbReference type="Pfam" id="PF01747">
    <property type="entry name" value="ATP-sulfurylase"/>
    <property type="match status" value="1"/>
</dbReference>
<dbReference type="Pfam" id="PF14306">
    <property type="entry name" value="PUA_2"/>
    <property type="match status" value="1"/>
</dbReference>
<dbReference type="SUPFAM" id="SSF52374">
    <property type="entry name" value="Nucleotidylyl transferase"/>
    <property type="match status" value="1"/>
</dbReference>
<dbReference type="SUPFAM" id="SSF88697">
    <property type="entry name" value="PUA domain-like"/>
    <property type="match status" value="1"/>
</dbReference>
<protein>
    <recommendedName>
        <fullName evidence="1">Sulfate adenylyltransferase</fullName>
        <ecNumber evidence="1">2.7.7.4</ecNumber>
    </recommendedName>
    <alternativeName>
        <fullName evidence="1">ATP-sulfurylase</fullName>
    </alternativeName>
    <alternativeName>
        <fullName evidence="1">Sulfate adenylate transferase</fullName>
        <shortName evidence="1">SAT</shortName>
    </alternativeName>
</protein>
<organism>
    <name type="scientific">Staphylococcus carnosus (strain TM300)</name>
    <dbReference type="NCBI Taxonomy" id="396513"/>
    <lineage>
        <taxon>Bacteria</taxon>
        <taxon>Bacillati</taxon>
        <taxon>Bacillota</taxon>
        <taxon>Bacilli</taxon>
        <taxon>Bacillales</taxon>
        <taxon>Staphylococcaceae</taxon>
        <taxon>Staphylococcus</taxon>
    </lineage>
</organism>
<proteinExistence type="inferred from homology"/>
<comment type="catalytic activity">
    <reaction evidence="1">
        <text>sulfate + ATP + H(+) = adenosine 5'-phosphosulfate + diphosphate</text>
        <dbReference type="Rhea" id="RHEA:18133"/>
        <dbReference type="ChEBI" id="CHEBI:15378"/>
        <dbReference type="ChEBI" id="CHEBI:16189"/>
        <dbReference type="ChEBI" id="CHEBI:30616"/>
        <dbReference type="ChEBI" id="CHEBI:33019"/>
        <dbReference type="ChEBI" id="CHEBI:58243"/>
        <dbReference type="EC" id="2.7.7.4"/>
    </reaction>
</comment>
<comment type="pathway">
    <text evidence="1">Sulfur metabolism; hydrogen sulfide biosynthesis; sulfite from sulfate: step 1/3.</text>
</comment>
<comment type="similarity">
    <text evidence="1">Belongs to the sulfate adenylyltransferase family.</text>
</comment>
<name>SAT_STACT</name>
<sequence length="399" mass="45092">MATATQIINYTSTPHGGELINRQLEGAEREALIKEAEAFPKLTLNAWSLSDLELIAIGGFSPLTGFMGEADYTNVVENLHLADGTLWSIPITLPVTEEQADAYELGSKIALYGEDDKLYGVLDLQEKFTYDKEKEAENVYGTTEEAHPGVKKVYEKGNVYLAGPIQLVNRPDHSEFEEFELDPIEVRQMFHDLGWKTVVGFQTRNPVHRAHEYIQKSALETVDGLLLNPLVGETKADDIPADVRMESYQVILKNYFPENRARLAIYPAAMRYAGPREAILHAIVRLNYGCTHFIVGRDHAGVGDYYGTYEAQELISQYEDELGINIMKFEHAFYCTKCENMATAKTCPHDKKYHVHLSGTKVREKLRNGEPLPKEFSRPEVAEVLIRGLRRHREQNGEG</sequence>
<keyword id="KW-0067">ATP-binding</keyword>
<keyword id="KW-0547">Nucleotide-binding</keyword>
<keyword id="KW-0548">Nucleotidyltransferase</keyword>
<keyword id="KW-1185">Reference proteome</keyword>
<keyword id="KW-0808">Transferase</keyword>